<reference key="1">
    <citation type="journal article" date="2009" name="Proc. Natl. Acad. Sci. U.S.A.">
        <title>Eukaryote-to-eukaryote gene transfer events revealed by the genome sequence of the wine yeast Saccharomyces cerevisiae EC1118.</title>
        <authorList>
            <person name="Novo M."/>
            <person name="Bigey F."/>
            <person name="Beyne E."/>
            <person name="Galeote V."/>
            <person name="Gavory F."/>
            <person name="Mallet S."/>
            <person name="Cambon B."/>
            <person name="Legras J.-L."/>
            <person name="Wincker P."/>
            <person name="Casaregola S."/>
            <person name="Dequin S."/>
        </authorList>
    </citation>
    <scope>NUCLEOTIDE SEQUENCE [LARGE SCALE GENOMIC DNA]</scope>
    <source>
        <strain>Lalvin EC1118 / Prise de mousse</strain>
    </source>
</reference>
<proteinExistence type="inferred from homology"/>
<feature type="chain" id="PRO_0000406495" description="Glucose starvation modulator protein 1">
    <location>
        <begin position="1"/>
        <end position="618"/>
    </location>
</feature>
<feature type="domain" description="PAS">
    <location>
        <begin position="466"/>
        <end position="538"/>
    </location>
</feature>
<feature type="DNA-binding region" description="Zn(2)-C6 fungal-type" evidence="2">
    <location>
        <begin position="20"/>
        <end position="48"/>
    </location>
</feature>
<feature type="region of interest" description="Disordered" evidence="3">
    <location>
        <begin position="325"/>
        <end position="352"/>
    </location>
</feature>
<feature type="compositionally biased region" description="Basic and acidic residues" evidence="3">
    <location>
        <begin position="335"/>
        <end position="352"/>
    </location>
</feature>
<dbReference type="EMBL" id="FN393075">
    <property type="protein sequence ID" value="CAY80677.2"/>
    <property type="molecule type" value="Genomic_DNA"/>
</dbReference>
<dbReference type="HOGENOM" id="CLU_010748_2_2_1"/>
<dbReference type="OrthoDB" id="33448at4893"/>
<dbReference type="Proteomes" id="UP000000286">
    <property type="component" value="Chromosome X, Scaffold EC1118_1J11"/>
</dbReference>
<dbReference type="GO" id="GO:0005634">
    <property type="term" value="C:nucleus"/>
    <property type="evidence" value="ECO:0007669"/>
    <property type="project" value="UniProtKB-SubCell"/>
</dbReference>
<dbReference type="GO" id="GO:0000981">
    <property type="term" value="F:DNA-binding transcription factor activity, RNA polymerase II-specific"/>
    <property type="evidence" value="ECO:0007669"/>
    <property type="project" value="InterPro"/>
</dbReference>
<dbReference type="GO" id="GO:0000977">
    <property type="term" value="F:RNA polymerase II transcription regulatory region sequence-specific DNA binding"/>
    <property type="evidence" value="ECO:0007669"/>
    <property type="project" value="TreeGrafter"/>
</dbReference>
<dbReference type="GO" id="GO:0008270">
    <property type="term" value="F:zinc ion binding"/>
    <property type="evidence" value="ECO:0007669"/>
    <property type="project" value="InterPro"/>
</dbReference>
<dbReference type="GO" id="GO:0009267">
    <property type="term" value="P:cellular response to starvation"/>
    <property type="evidence" value="ECO:0007669"/>
    <property type="project" value="TreeGrafter"/>
</dbReference>
<dbReference type="CDD" id="cd00067">
    <property type="entry name" value="GAL4"/>
    <property type="match status" value="1"/>
</dbReference>
<dbReference type="Gene3D" id="4.10.240.10">
    <property type="entry name" value="Zn(2)-C6 fungal-type DNA-binding domain"/>
    <property type="match status" value="1"/>
</dbReference>
<dbReference type="InterPro" id="IPR050335">
    <property type="entry name" value="ERT1_acuK_gluconeogen_tf"/>
</dbReference>
<dbReference type="InterPro" id="IPR056751">
    <property type="entry name" value="PAS_13"/>
</dbReference>
<dbReference type="InterPro" id="IPR036864">
    <property type="entry name" value="Zn2-C6_fun-type_DNA-bd_sf"/>
</dbReference>
<dbReference type="InterPro" id="IPR001138">
    <property type="entry name" value="Zn2Cys6_DnaBD"/>
</dbReference>
<dbReference type="PANTHER" id="PTHR47659:SF8">
    <property type="entry name" value="GLUCOSE STARVATION MODULATOR PROTEIN 1"/>
    <property type="match status" value="1"/>
</dbReference>
<dbReference type="PANTHER" id="PTHR47659">
    <property type="entry name" value="ZN(II)2CYS6 TRANSCRIPTION FACTOR (EUROFUNG)-RELATED"/>
    <property type="match status" value="1"/>
</dbReference>
<dbReference type="Pfam" id="PF24990">
    <property type="entry name" value="PAS_13"/>
    <property type="match status" value="1"/>
</dbReference>
<dbReference type="Pfam" id="PF00172">
    <property type="entry name" value="Zn_clus"/>
    <property type="match status" value="1"/>
</dbReference>
<dbReference type="SMART" id="SM00066">
    <property type="entry name" value="GAL4"/>
    <property type="match status" value="1"/>
</dbReference>
<dbReference type="SUPFAM" id="SSF57701">
    <property type="entry name" value="Zn2/Cys6 DNA-binding domain"/>
    <property type="match status" value="1"/>
</dbReference>
<dbReference type="PROSITE" id="PS00463">
    <property type="entry name" value="ZN2_CY6_FUNGAL_1"/>
    <property type="match status" value="1"/>
</dbReference>
<dbReference type="PROSITE" id="PS50048">
    <property type="entry name" value="ZN2_CY6_FUNGAL_2"/>
    <property type="match status" value="1"/>
</dbReference>
<gene>
    <name type="primary">GSM1</name>
    <name type="ORF">EC1118_1J11_1420g</name>
</gene>
<organism>
    <name type="scientific">Saccharomyces cerevisiae (strain Lalvin EC1118 / Prise de mousse)</name>
    <name type="common">Baker's yeast</name>
    <dbReference type="NCBI Taxonomy" id="643680"/>
    <lineage>
        <taxon>Eukaryota</taxon>
        <taxon>Fungi</taxon>
        <taxon>Dikarya</taxon>
        <taxon>Ascomycota</taxon>
        <taxon>Saccharomycotina</taxon>
        <taxon>Saccharomycetes</taxon>
        <taxon>Saccharomycetales</taxon>
        <taxon>Saccharomycetaceae</taxon>
        <taxon>Saccharomyces</taxon>
    </lineage>
</organism>
<comment type="function">
    <text evidence="1">Transcription factor which regulates nonfermentable carbon utilization. Binds specifically to 5'-CGGN(8)CGG-3' and 5'-CGGN(9)CGG-3' sequences in the promoter region (By similarity).</text>
</comment>
<comment type="subcellular location">
    <subcellularLocation>
        <location evidence="2">Nucleus</location>
    </subcellularLocation>
</comment>
<comment type="similarity">
    <text evidence="4">Belongs to the ERT1/acuK family.</text>
</comment>
<name>GSM1_YEAS8</name>
<protein>
    <recommendedName>
        <fullName>Glucose starvation modulator protein 1</fullName>
    </recommendedName>
</protein>
<keyword id="KW-0238">DNA-binding</keyword>
<keyword id="KW-0479">Metal-binding</keyword>
<keyword id="KW-0539">Nucleus</keyword>
<keyword id="KW-0804">Transcription</keyword>
<keyword id="KW-0805">Transcription regulation</keyword>
<keyword id="KW-0862">Zinc</keyword>
<sequence>MTKKLPSELKQTRKSIQTACEFCHTKHIQCDVGRPCQNCLKRNIGKFCRDKKRKSRKRIEKHGTQPYLNLGKRLVIHDVPSKTVSPSSVHLQRDFLSSDQEKPGKTPAHNTNIQYTYNINDNFQSAGSIPRITNFNTNNGQTVLENTSNNISASQAVHLMNDPIIPTVRKSTLNLKSHFLEQHKAMQQPLATNCLVATSNVPVHSGMDDSNKSDDDVDDETNIHFDSMWCNDEYMKLKDIVDISTPFLPNNSQIFSLQESEYPNPSASTRGNSSLHLTNLLNSTKSVNDQKDSSIGHSTSTFNTYDEVVSRPFISLDMLHLNRGANANTHPSHNAKLESECDSSSHSDADLEKHDTDFISPSKFRELVKTPQDLYDNKCLIKPHNYKLAYTKLLTTLRKKFLEGAEIDKSASVKDEHSTQKHNLRYDLEVIIRSILERYAPIFISLTSNMIEEDLLLQEVTLQRALLDLENMAKLVSCTPMCIWRRSGEICFVSNEFYSLTGFNKNLLLDRTSFIFEYLDHKSVSNYFQIFNELLAFGYNDINKRKKLLMLNACSSTSSKITEGFSFTTDGKAIFTKCNLLLSNGLYLKCACCWTVKRDSFNIPILVMGQFLPIFEMD</sequence>
<evidence type="ECO:0000250" key="1"/>
<evidence type="ECO:0000255" key="2">
    <source>
        <dbReference type="PROSITE-ProRule" id="PRU00227"/>
    </source>
</evidence>
<evidence type="ECO:0000256" key="3">
    <source>
        <dbReference type="SAM" id="MobiDB-lite"/>
    </source>
</evidence>
<evidence type="ECO:0000305" key="4"/>
<accession>C8ZBB1</accession>